<dbReference type="EMBL" id="L77117">
    <property type="protein sequence ID" value="AAB98454.1"/>
    <property type="molecule type" value="Genomic_DNA"/>
</dbReference>
<dbReference type="PIR" id="A64358">
    <property type="entry name" value="A64358"/>
</dbReference>
<dbReference type="RefSeq" id="WP_010869965.1">
    <property type="nucleotide sequence ID" value="NC_000909.1"/>
</dbReference>
<dbReference type="SMR" id="P54036"/>
<dbReference type="FunCoup" id="P54036">
    <property type="interactions" value="158"/>
</dbReference>
<dbReference type="STRING" id="243232.MJ_0465"/>
<dbReference type="PaxDb" id="243232-MJ_0465"/>
<dbReference type="EnsemblBacteria" id="AAB98454">
    <property type="protein sequence ID" value="AAB98454"/>
    <property type="gene ID" value="MJ_0465"/>
</dbReference>
<dbReference type="GeneID" id="1451327"/>
<dbReference type="KEGG" id="mja:MJ_0465"/>
<dbReference type="eggNOG" id="arCOG04096">
    <property type="taxonomic scope" value="Archaea"/>
</dbReference>
<dbReference type="HOGENOM" id="CLU_073626_0_3_2"/>
<dbReference type="InParanoid" id="P54036"/>
<dbReference type="OrthoDB" id="10698at2157"/>
<dbReference type="PhylomeDB" id="P54036"/>
<dbReference type="Proteomes" id="UP000000805">
    <property type="component" value="Chromosome"/>
</dbReference>
<dbReference type="GO" id="GO:0022627">
    <property type="term" value="C:cytosolic small ribosomal subunit"/>
    <property type="evidence" value="ECO:0000318"/>
    <property type="project" value="GO_Central"/>
</dbReference>
<dbReference type="GO" id="GO:0019843">
    <property type="term" value="F:rRNA binding"/>
    <property type="evidence" value="ECO:0007669"/>
    <property type="project" value="UniProtKB-UniRule"/>
</dbReference>
<dbReference type="GO" id="GO:0003735">
    <property type="term" value="F:structural constituent of ribosome"/>
    <property type="evidence" value="ECO:0000318"/>
    <property type="project" value="GO_Central"/>
</dbReference>
<dbReference type="GO" id="GO:0006412">
    <property type="term" value="P:translation"/>
    <property type="evidence" value="ECO:0007669"/>
    <property type="project" value="UniProtKB-UniRule"/>
</dbReference>
<dbReference type="CDD" id="cd00364">
    <property type="entry name" value="Ribosomal_uS17"/>
    <property type="match status" value="1"/>
</dbReference>
<dbReference type="FunFam" id="2.40.50.1000:FF:000005">
    <property type="entry name" value="30S ribosomal protein S17"/>
    <property type="match status" value="1"/>
</dbReference>
<dbReference type="Gene3D" id="2.40.50.1000">
    <property type="match status" value="1"/>
</dbReference>
<dbReference type="HAMAP" id="MF_01345_A">
    <property type="entry name" value="Ribosomal_uS17_A"/>
    <property type="match status" value="1"/>
</dbReference>
<dbReference type="InterPro" id="IPR012340">
    <property type="entry name" value="NA-bd_OB-fold"/>
</dbReference>
<dbReference type="InterPro" id="IPR000266">
    <property type="entry name" value="Ribosomal_uS17"/>
</dbReference>
<dbReference type="InterPro" id="IPR028333">
    <property type="entry name" value="Ribosomal_uS17_arc/euk"/>
</dbReference>
<dbReference type="InterPro" id="IPR019978">
    <property type="entry name" value="Ribosomal_uS17_archaeal"/>
</dbReference>
<dbReference type="InterPro" id="IPR019979">
    <property type="entry name" value="Ribosomal_uS17_CS"/>
</dbReference>
<dbReference type="NCBIfam" id="NF006345">
    <property type="entry name" value="PRK08572.1"/>
    <property type="match status" value="1"/>
</dbReference>
<dbReference type="NCBIfam" id="TIGR03630">
    <property type="entry name" value="uS17_arch"/>
    <property type="match status" value="1"/>
</dbReference>
<dbReference type="PANTHER" id="PTHR10744">
    <property type="entry name" value="40S RIBOSOMAL PROTEIN S11 FAMILY MEMBER"/>
    <property type="match status" value="1"/>
</dbReference>
<dbReference type="PANTHER" id="PTHR10744:SF9">
    <property type="entry name" value="40S RIBOSOMAL PROTEIN S11-RELATED"/>
    <property type="match status" value="1"/>
</dbReference>
<dbReference type="Pfam" id="PF00366">
    <property type="entry name" value="Ribosomal_S17"/>
    <property type="match status" value="1"/>
</dbReference>
<dbReference type="PRINTS" id="PR00973">
    <property type="entry name" value="RIBOSOMALS17"/>
</dbReference>
<dbReference type="SUPFAM" id="SSF50249">
    <property type="entry name" value="Nucleic acid-binding proteins"/>
    <property type="match status" value="1"/>
</dbReference>
<dbReference type="PROSITE" id="PS00056">
    <property type="entry name" value="RIBOSOMAL_S17"/>
    <property type="match status" value="1"/>
</dbReference>
<accession>P54036</accession>
<feature type="chain" id="PRO_0000128499" description="Small ribosomal subunit protein uS17">
    <location>
        <begin position="1"/>
        <end position="117"/>
    </location>
</feature>
<organism>
    <name type="scientific">Methanocaldococcus jannaschii (strain ATCC 43067 / DSM 2661 / JAL-1 / JCM 10045 / NBRC 100440)</name>
    <name type="common">Methanococcus jannaschii</name>
    <dbReference type="NCBI Taxonomy" id="243232"/>
    <lineage>
        <taxon>Archaea</taxon>
        <taxon>Methanobacteriati</taxon>
        <taxon>Methanobacteriota</taxon>
        <taxon>Methanomada group</taxon>
        <taxon>Methanococci</taxon>
        <taxon>Methanococcales</taxon>
        <taxon>Methanocaldococcaceae</taxon>
        <taxon>Methanocaldococcus</taxon>
    </lineage>
</organism>
<protein>
    <recommendedName>
        <fullName evidence="1">Small ribosomal subunit protein uS17</fullName>
    </recommendedName>
    <alternativeName>
        <fullName evidence="2">30S ribosomal protein S17</fullName>
    </alternativeName>
</protein>
<keyword id="KW-1185">Reference proteome</keyword>
<keyword id="KW-0687">Ribonucleoprotein</keyword>
<keyword id="KW-0689">Ribosomal protein</keyword>
<keyword id="KW-0694">RNA-binding</keyword>
<keyword id="KW-0699">rRNA-binding</keyword>
<evidence type="ECO:0000255" key="1">
    <source>
        <dbReference type="HAMAP-Rule" id="MF_01345"/>
    </source>
</evidence>
<evidence type="ECO:0000305" key="2"/>
<sequence length="117" mass="13266">MAARNIGIQVKAPEVECDDKNCPFHGNLPVRGQSFVGVVVSDKPHKTVIIKREVVKYIKKYERYERRTTKLAAHNPPCIHARVGDIVRVMECRPISKTKAFVVVEKLGRIDEVKGEE</sequence>
<gene>
    <name evidence="1" type="primary">rps17</name>
    <name type="ordered locus">MJ0465</name>
</gene>
<name>RS17_METJA</name>
<reference key="1">
    <citation type="journal article" date="1996" name="Science">
        <title>Complete genome sequence of the methanogenic archaeon, Methanococcus jannaschii.</title>
        <authorList>
            <person name="Bult C.J."/>
            <person name="White O."/>
            <person name="Olsen G.J."/>
            <person name="Zhou L."/>
            <person name="Fleischmann R.D."/>
            <person name="Sutton G.G."/>
            <person name="Blake J.A."/>
            <person name="FitzGerald L.M."/>
            <person name="Clayton R.A."/>
            <person name="Gocayne J.D."/>
            <person name="Kerlavage A.R."/>
            <person name="Dougherty B.A."/>
            <person name="Tomb J.-F."/>
            <person name="Adams M.D."/>
            <person name="Reich C.I."/>
            <person name="Overbeek R."/>
            <person name="Kirkness E.F."/>
            <person name="Weinstock K.G."/>
            <person name="Merrick J.M."/>
            <person name="Glodek A."/>
            <person name="Scott J.L."/>
            <person name="Geoghagen N.S.M."/>
            <person name="Weidman J.F."/>
            <person name="Fuhrmann J.L."/>
            <person name="Nguyen D."/>
            <person name="Utterback T.R."/>
            <person name="Kelley J.M."/>
            <person name="Peterson J.D."/>
            <person name="Sadow P.W."/>
            <person name="Hanna M.C."/>
            <person name="Cotton M.D."/>
            <person name="Roberts K.M."/>
            <person name="Hurst M.A."/>
            <person name="Kaine B.P."/>
            <person name="Borodovsky M."/>
            <person name="Klenk H.-P."/>
            <person name="Fraser C.M."/>
            <person name="Smith H.O."/>
            <person name="Woese C.R."/>
            <person name="Venter J.C."/>
        </authorList>
    </citation>
    <scope>NUCLEOTIDE SEQUENCE [LARGE SCALE GENOMIC DNA]</scope>
    <source>
        <strain>ATCC 43067 / DSM 2661 / JAL-1 / JCM 10045 / NBRC 100440</strain>
    </source>
</reference>
<proteinExistence type="inferred from homology"/>
<comment type="function">
    <text evidence="1">One of the primary rRNA binding proteins, it binds specifically to the 5'-end of 16S ribosomal RNA.</text>
</comment>
<comment type="subunit">
    <text evidence="1">Part of the 30S ribosomal subunit.</text>
</comment>
<comment type="similarity">
    <text evidence="1">Belongs to the universal ribosomal protein uS17 family.</text>
</comment>